<organism>
    <name type="scientific">Shewanella sp. (strain ANA-3)</name>
    <dbReference type="NCBI Taxonomy" id="94122"/>
    <lineage>
        <taxon>Bacteria</taxon>
        <taxon>Pseudomonadati</taxon>
        <taxon>Pseudomonadota</taxon>
        <taxon>Gammaproteobacteria</taxon>
        <taxon>Alteromonadales</taxon>
        <taxon>Shewanellaceae</taxon>
        <taxon>Shewanella</taxon>
    </lineage>
</organism>
<name>HSLU_SHESA</name>
<proteinExistence type="inferred from homology"/>
<protein>
    <recommendedName>
        <fullName evidence="1">ATP-dependent protease ATPase subunit HslU</fullName>
    </recommendedName>
    <alternativeName>
        <fullName evidence="1">Unfoldase HslU</fullName>
    </alternativeName>
</protein>
<gene>
    <name evidence="1" type="primary">hslU</name>
    <name type="ordered locus">Shewana3_3700</name>
</gene>
<comment type="function">
    <text evidence="1">ATPase subunit of a proteasome-like degradation complex; this subunit has chaperone activity. The binding of ATP and its subsequent hydrolysis by HslU are essential for unfolding of protein substrates subsequently hydrolyzed by HslV. HslU recognizes the N-terminal part of its protein substrates and unfolds these before they are guided to HslV for hydrolysis.</text>
</comment>
<comment type="subunit">
    <text evidence="1">A double ring-shaped homohexamer of HslV is capped on each side by a ring-shaped HslU homohexamer. The assembly of the HslU/HslV complex is dependent on binding of ATP.</text>
</comment>
<comment type="subcellular location">
    <subcellularLocation>
        <location evidence="1">Cytoplasm</location>
    </subcellularLocation>
</comment>
<comment type="similarity">
    <text evidence="1">Belongs to the ClpX chaperone family. HslU subfamily.</text>
</comment>
<reference key="1">
    <citation type="submission" date="2006-09" db="EMBL/GenBank/DDBJ databases">
        <title>Complete sequence of chromosome 1 of Shewanella sp. ANA-3.</title>
        <authorList>
            <person name="Copeland A."/>
            <person name="Lucas S."/>
            <person name="Lapidus A."/>
            <person name="Barry K."/>
            <person name="Detter J.C."/>
            <person name="Glavina del Rio T."/>
            <person name="Hammon N."/>
            <person name="Israni S."/>
            <person name="Dalin E."/>
            <person name="Tice H."/>
            <person name="Pitluck S."/>
            <person name="Chertkov O."/>
            <person name="Brettin T."/>
            <person name="Bruce D."/>
            <person name="Han C."/>
            <person name="Tapia R."/>
            <person name="Gilna P."/>
            <person name="Schmutz J."/>
            <person name="Larimer F."/>
            <person name="Land M."/>
            <person name="Hauser L."/>
            <person name="Kyrpides N."/>
            <person name="Kim E."/>
            <person name="Newman D."/>
            <person name="Salticov C."/>
            <person name="Konstantinidis K."/>
            <person name="Klappenback J."/>
            <person name="Tiedje J."/>
            <person name="Richardson P."/>
        </authorList>
    </citation>
    <scope>NUCLEOTIDE SEQUENCE [LARGE SCALE GENOMIC DNA]</scope>
    <source>
        <strain>ANA-3</strain>
    </source>
</reference>
<evidence type="ECO:0000255" key="1">
    <source>
        <dbReference type="HAMAP-Rule" id="MF_00249"/>
    </source>
</evidence>
<evidence type="ECO:0000256" key="2">
    <source>
        <dbReference type="SAM" id="MobiDB-lite"/>
    </source>
</evidence>
<sequence length="442" mass="49909">MSEMTPREIVHELDAHIIGQKKAKRSVAVALRNRWRRMQLDADFRQEVTPKNILMIGPTGVGKTEIARRLAKLANAPFIKVEATKFTEVGYVGKEVEQIIRDLTDIAIKLTREQQMGKCRQRAEEHAEERILDALLPKPKNDWDNTDSDTSSNTRQIFRKKLREGQLDDKEIDIDVAQPQVGIEIMSPPGMEEMTNQLQSLFKNMGQAPAKRRKMKIKEAFKLLIEEEAAKLVNQEDLKEQAIELVEQHGIVFLDEIDKICKRGETSGPDVSREGVQRDLLPLVEGCTVTTKHGMVKTDHILFIASGAFQMAKPSDLIPELQGRLPIRVELDALSADDFKRILTEPHASLTEQYIALMATEGVTIEFAESGIESIAKAAWQVNERTENIGARRLHTVMEKLMEDISYEASDKSGSSFVIDADYVSAHLDNLVQDEDLSRFIL</sequence>
<keyword id="KW-0067">ATP-binding</keyword>
<keyword id="KW-0143">Chaperone</keyword>
<keyword id="KW-0963">Cytoplasm</keyword>
<keyword id="KW-0547">Nucleotide-binding</keyword>
<keyword id="KW-0346">Stress response</keyword>
<accession>A0L1J9</accession>
<feature type="chain" id="PRO_1000012806" description="ATP-dependent protease ATPase subunit HslU">
    <location>
        <begin position="1"/>
        <end position="442"/>
    </location>
</feature>
<feature type="region of interest" description="Disordered" evidence="2">
    <location>
        <begin position="133"/>
        <end position="156"/>
    </location>
</feature>
<feature type="binding site" evidence="1">
    <location>
        <position position="18"/>
    </location>
    <ligand>
        <name>ATP</name>
        <dbReference type="ChEBI" id="CHEBI:30616"/>
    </ligand>
</feature>
<feature type="binding site" evidence="1">
    <location>
        <begin position="60"/>
        <end position="65"/>
    </location>
    <ligand>
        <name>ATP</name>
        <dbReference type="ChEBI" id="CHEBI:30616"/>
    </ligand>
</feature>
<feature type="binding site" evidence="1">
    <location>
        <position position="255"/>
    </location>
    <ligand>
        <name>ATP</name>
        <dbReference type="ChEBI" id="CHEBI:30616"/>
    </ligand>
</feature>
<feature type="binding site" evidence="1">
    <location>
        <position position="320"/>
    </location>
    <ligand>
        <name>ATP</name>
        <dbReference type="ChEBI" id="CHEBI:30616"/>
    </ligand>
</feature>
<feature type="binding site" evidence="1">
    <location>
        <position position="392"/>
    </location>
    <ligand>
        <name>ATP</name>
        <dbReference type="ChEBI" id="CHEBI:30616"/>
    </ligand>
</feature>
<dbReference type="EMBL" id="CP000469">
    <property type="protein sequence ID" value="ABK49918.1"/>
    <property type="molecule type" value="Genomic_DNA"/>
</dbReference>
<dbReference type="RefSeq" id="WP_011624251.1">
    <property type="nucleotide sequence ID" value="NC_008577.1"/>
</dbReference>
<dbReference type="SMR" id="A0L1J9"/>
<dbReference type="STRING" id="94122.Shewana3_3700"/>
<dbReference type="KEGG" id="shn:Shewana3_3700"/>
<dbReference type="eggNOG" id="COG1220">
    <property type="taxonomic scope" value="Bacteria"/>
</dbReference>
<dbReference type="HOGENOM" id="CLU_033123_0_0_6"/>
<dbReference type="OrthoDB" id="9804062at2"/>
<dbReference type="Proteomes" id="UP000002589">
    <property type="component" value="Chromosome"/>
</dbReference>
<dbReference type="GO" id="GO:0009376">
    <property type="term" value="C:HslUV protease complex"/>
    <property type="evidence" value="ECO:0007669"/>
    <property type="project" value="UniProtKB-UniRule"/>
</dbReference>
<dbReference type="GO" id="GO:0005524">
    <property type="term" value="F:ATP binding"/>
    <property type="evidence" value="ECO:0007669"/>
    <property type="project" value="UniProtKB-UniRule"/>
</dbReference>
<dbReference type="GO" id="GO:0016887">
    <property type="term" value="F:ATP hydrolysis activity"/>
    <property type="evidence" value="ECO:0007669"/>
    <property type="project" value="InterPro"/>
</dbReference>
<dbReference type="GO" id="GO:0008233">
    <property type="term" value="F:peptidase activity"/>
    <property type="evidence" value="ECO:0007669"/>
    <property type="project" value="InterPro"/>
</dbReference>
<dbReference type="GO" id="GO:0036402">
    <property type="term" value="F:proteasome-activating activity"/>
    <property type="evidence" value="ECO:0007669"/>
    <property type="project" value="UniProtKB-UniRule"/>
</dbReference>
<dbReference type="GO" id="GO:0043335">
    <property type="term" value="P:protein unfolding"/>
    <property type="evidence" value="ECO:0007669"/>
    <property type="project" value="UniProtKB-UniRule"/>
</dbReference>
<dbReference type="GO" id="GO:0051603">
    <property type="term" value="P:proteolysis involved in protein catabolic process"/>
    <property type="evidence" value="ECO:0007669"/>
    <property type="project" value="TreeGrafter"/>
</dbReference>
<dbReference type="CDD" id="cd19498">
    <property type="entry name" value="RecA-like_HslU"/>
    <property type="match status" value="1"/>
</dbReference>
<dbReference type="FunFam" id="1.10.8.10:FF:000028">
    <property type="entry name" value="ATP-dependent protease ATPase subunit HslU"/>
    <property type="match status" value="1"/>
</dbReference>
<dbReference type="FunFam" id="1.10.8.60:FF:000027">
    <property type="entry name" value="ATP-dependent protease ATPase subunit HslU"/>
    <property type="match status" value="1"/>
</dbReference>
<dbReference type="FunFam" id="3.40.50.300:FF:000213">
    <property type="entry name" value="ATP-dependent protease ATPase subunit HslU"/>
    <property type="match status" value="1"/>
</dbReference>
<dbReference type="FunFam" id="3.40.50.300:FF:000220">
    <property type="entry name" value="ATP-dependent protease ATPase subunit HslU"/>
    <property type="match status" value="1"/>
</dbReference>
<dbReference type="Gene3D" id="1.10.8.60">
    <property type="match status" value="1"/>
</dbReference>
<dbReference type="Gene3D" id="1.10.8.10">
    <property type="entry name" value="DNA helicase RuvA subunit, C-terminal domain"/>
    <property type="match status" value="1"/>
</dbReference>
<dbReference type="Gene3D" id="3.40.50.300">
    <property type="entry name" value="P-loop containing nucleotide triphosphate hydrolases"/>
    <property type="match status" value="2"/>
</dbReference>
<dbReference type="HAMAP" id="MF_00249">
    <property type="entry name" value="HslU"/>
    <property type="match status" value="1"/>
</dbReference>
<dbReference type="InterPro" id="IPR003593">
    <property type="entry name" value="AAA+_ATPase"/>
</dbReference>
<dbReference type="InterPro" id="IPR050052">
    <property type="entry name" value="ATP-dep_Clp_protease_ClpX"/>
</dbReference>
<dbReference type="InterPro" id="IPR003959">
    <property type="entry name" value="ATPase_AAA_core"/>
</dbReference>
<dbReference type="InterPro" id="IPR019489">
    <property type="entry name" value="Clp_ATPase_C"/>
</dbReference>
<dbReference type="InterPro" id="IPR004491">
    <property type="entry name" value="HslU"/>
</dbReference>
<dbReference type="InterPro" id="IPR027417">
    <property type="entry name" value="P-loop_NTPase"/>
</dbReference>
<dbReference type="NCBIfam" id="TIGR00390">
    <property type="entry name" value="hslU"/>
    <property type="match status" value="1"/>
</dbReference>
<dbReference type="NCBIfam" id="NF003544">
    <property type="entry name" value="PRK05201.1"/>
    <property type="match status" value="1"/>
</dbReference>
<dbReference type="PANTHER" id="PTHR48102">
    <property type="entry name" value="ATP-DEPENDENT CLP PROTEASE ATP-BINDING SUBUNIT CLPX-LIKE, MITOCHONDRIAL-RELATED"/>
    <property type="match status" value="1"/>
</dbReference>
<dbReference type="PANTHER" id="PTHR48102:SF3">
    <property type="entry name" value="ATP-DEPENDENT PROTEASE ATPASE SUBUNIT HSLU"/>
    <property type="match status" value="1"/>
</dbReference>
<dbReference type="Pfam" id="PF00004">
    <property type="entry name" value="AAA"/>
    <property type="match status" value="1"/>
</dbReference>
<dbReference type="Pfam" id="PF07724">
    <property type="entry name" value="AAA_2"/>
    <property type="match status" value="1"/>
</dbReference>
<dbReference type="SMART" id="SM00382">
    <property type="entry name" value="AAA"/>
    <property type="match status" value="1"/>
</dbReference>
<dbReference type="SMART" id="SM01086">
    <property type="entry name" value="ClpB_D2-small"/>
    <property type="match status" value="1"/>
</dbReference>
<dbReference type="SUPFAM" id="SSF52540">
    <property type="entry name" value="P-loop containing nucleoside triphosphate hydrolases"/>
    <property type="match status" value="1"/>
</dbReference>